<proteinExistence type="inferred from homology"/>
<dbReference type="EC" id="3.2.1.-" evidence="1"/>
<dbReference type="EMBL" id="Y13917">
    <property type="protein sequence ID" value="CAA74215.1"/>
    <property type="molecule type" value="Genomic_DNA"/>
</dbReference>
<dbReference type="EMBL" id="AL009126">
    <property type="protein sequence ID" value="CAB13711.1"/>
    <property type="molecule type" value="Genomic_DNA"/>
</dbReference>
<dbReference type="PIR" id="H69893">
    <property type="entry name" value="H69893"/>
</dbReference>
<dbReference type="RefSeq" id="NP_389710.1">
    <property type="nucleotide sequence ID" value="NC_000964.3"/>
</dbReference>
<dbReference type="RefSeq" id="WP_003231519.1">
    <property type="nucleotide sequence ID" value="NZ_OZ025638.1"/>
</dbReference>
<dbReference type="SMR" id="O35015"/>
<dbReference type="FunCoup" id="O35015">
    <property type="interactions" value="107"/>
</dbReference>
<dbReference type="STRING" id="224308.BSU18280"/>
<dbReference type="PaxDb" id="224308-BSU18280"/>
<dbReference type="EnsemblBacteria" id="CAB13711">
    <property type="protein sequence ID" value="CAB13711"/>
    <property type="gene ID" value="BSU_18280"/>
</dbReference>
<dbReference type="GeneID" id="939977"/>
<dbReference type="KEGG" id="bsu:BSU18280"/>
<dbReference type="PATRIC" id="fig|224308.179.peg.1995"/>
<dbReference type="eggNOG" id="COG1649">
    <property type="taxonomic scope" value="Bacteria"/>
</dbReference>
<dbReference type="InParanoid" id="O35015"/>
<dbReference type="OrthoDB" id="9794671at2"/>
<dbReference type="PhylomeDB" id="O35015"/>
<dbReference type="BioCyc" id="BSUB:BSU18280-MONOMER"/>
<dbReference type="Proteomes" id="UP000001570">
    <property type="component" value="Chromosome"/>
</dbReference>
<dbReference type="GO" id="GO:0016798">
    <property type="term" value="F:hydrolase activity, acting on glycosyl bonds"/>
    <property type="evidence" value="ECO:0007669"/>
    <property type="project" value="UniProtKB-KW"/>
</dbReference>
<dbReference type="Gene3D" id="3.20.20.80">
    <property type="entry name" value="Glycosidases"/>
    <property type="match status" value="1"/>
</dbReference>
<dbReference type="Gene3D" id="2.60.40.10">
    <property type="entry name" value="Immunoglobulins"/>
    <property type="match status" value="1"/>
</dbReference>
<dbReference type="InterPro" id="IPR052177">
    <property type="entry name" value="Divisome_Glycosyl_Hydrolase"/>
</dbReference>
<dbReference type="InterPro" id="IPR003790">
    <property type="entry name" value="GHL10"/>
</dbReference>
<dbReference type="InterPro" id="IPR017853">
    <property type="entry name" value="Glycoside_hydrolase_SF"/>
</dbReference>
<dbReference type="InterPro" id="IPR013783">
    <property type="entry name" value="Ig-like_fold"/>
</dbReference>
<dbReference type="PANTHER" id="PTHR43405">
    <property type="entry name" value="GLYCOSYL HYDROLASE DIGH"/>
    <property type="match status" value="1"/>
</dbReference>
<dbReference type="PANTHER" id="PTHR43405:SF1">
    <property type="entry name" value="GLYCOSYL HYDROLASE DIGH"/>
    <property type="match status" value="1"/>
</dbReference>
<dbReference type="Pfam" id="PF02638">
    <property type="entry name" value="GHL10"/>
    <property type="match status" value="1"/>
</dbReference>
<dbReference type="SUPFAM" id="SSF51445">
    <property type="entry name" value="(Trans)glycosidases"/>
    <property type="match status" value="1"/>
</dbReference>
<sequence>MKVCQKSIVRFLVSLIIGTFVISVPFMANAQSDRELRAVWIASVLNIDWPSKKGLSVKEQKQEYIKLLDDVQKMGMNAVIVQIKPTADAFYPSAYGPWSEYLTGVQGKDPGYDPLAFMIEETHKRNLEFHAWFNPYRITMNHTDLNKLSEDHPARKHPDWVAAYGNQLYYHPGIPEARDFIVKGIEEVVKHYDIDAVHMDDYFYPYKIAGQEFPDQAQYEQYGKDAFSNIDDWRRDNVNQLVKQINQTIKAAKPYVKFGISPFGVWRNAADDPTGSNTKAGVRNYDDLYADTRHWIQEGDIDYIAPQIYWSIGFNAAAYDVLADWWSNEVKNRPVHLYIGQAAYKINNNFDPPWSDPEEYVRQITLNRQLELVKGSMHFSLKDLNKNPLGIKDSLSTDLYSKPALVPQMPWLDNTAPKKPKLTKVTEDKNGNLLQIKDHPSNQKTKETAYYAIYRAEGKKQRTLLATQRKTHEQQTFLDNTADPNKKYTYYVTSADRLHNESKASKRTTK</sequence>
<evidence type="ECO:0000250" key="1">
    <source>
        <dbReference type="UniProtKB" id="P64426"/>
    </source>
</evidence>
<evidence type="ECO:0000255" key="2"/>
<evidence type="ECO:0000269" key="3">
    <source>
    </source>
</evidence>
<evidence type="ECO:0000305" key="4"/>
<name>YNGK_BACSU</name>
<accession>O35015</accession>
<accession>Q799L9</accession>
<reference key="1">
    <citation type="journal article" date="1997" name="Microbiology">
        <title>Sequence completion, identification and definition of the fengycin operon in Bacillus subtilis 168.</title>
        <authorList>
            <person name="Tosato V."/>
            <person name="Albertini A.M."/>
            <person name="Zotti M."/>
            <person name="Sonda S."/>
            <person name="Bruschi C.V."/>
        </authorList>
    </citation>
    <scope>NUCLEOTIDE SEQUENCE [GENOMIC DNA]</scope>
    <source>
        <strain>168</strain>
    </source>
</reference>
<reference key="2">
    <citation type="journal article" date="1997" name="Nature">
        <title>The complete genome sequence of the Gram-positive bacterium Bacillus subtilis.</title>
        <authorList>
            <person name="Kunst F."/>
            <person name="Ogasawara N."/>
            <person name="Moszer I."/>
            <person name="Albertini A.M."/>
            <person name="Alloni G."/>
            <person name="Azevedo V."/>
            <person name="Bertero M.G."/>
            <person name="Bessieres P."/>
            <person name="Bolotin A."/>
            <person name="Borchert S."/>
            <person name="Borriss R."/>
            <person name="Boursier L."/>
            <person name="Brans A."/>
            <person name="Braun M."/>
            <person name="Brignell S.C."/>
            <person name="Bron S."/>
            <person name="Brouillet S."/>
            <person name="Bruschi C.V."/>
            <person name="Caldwell B."/>
            <person name="Capuano V."/>
            <person name="Carter N.M."/>
            <person name="Choi S.-K."/>
            <person name="Codani J.-J."/>
            <person name="Connerton I.F."/>
            <person name="Cummings N.J."/>
            <person name="Daniel R.A."/>
            <person name="Denizot F."/>
            <person name="Devine K.M."/>
            <person name="Duesterhoeft A."/>
            <person name="Ehrlich S.D."/>
            <person name="Emmerson P.T."/>
            <person name="Entian K.-D."/>
            <person name="Errington J."/>
            <person name="Fabret C."/>
            <person name="Ferrari E."/>
            <person name="Foulger D."/>
            <person name="Fritz C."/>
            <person name="Fujita M."/>
            <person name="Fujita Y."/>
            <person name="Fuma S."/>
            <person name="Galizzi A."/>
            <person name="Galleron N."/>
            <person name="Ghim S.-Y."/>
            <person name="Glaser P."/>
            <person name="Goffeau A."/>
            <person name="Golightly E.J."/>
            <person name="Grandi G."/>
            <person name="Guiseppi G."/>
            <person name="Guy B.J."/>
            <person name="Haga K."/>
            <person name="Haiech J."/>
            <person name="Harwood C.R."/>
            <person name="Henaut A."/>
            <person name="Hilbert H."/>
            <person name="Holsappel S."/>
            <person name="Hosono S."/>
            <person name="Hullo M.-F."/>
            <person name="Itaya M."/>
            <person name="Jones L.-M."/>
            <person name="Joris B."/>
            <person name="Karamata D."/>
            <person name="Kasahara Y."/>
            <person name="Klaerr-Blanchard M."/>
            <person name="Klein C."/>
            <person name="Kobayashi Y."/>
            <person name="Koetter P."/>
            <person name="Koningstein G."/>
            <person name="Krogh S."/>
            <person name="Kumano M."/>
            <person name="Kurita K."/>
            <person name="Lapidus A."/>
            <person name="Lardinois S."/>
            <person name="Lauber J."/>
            <person name="Lazarevic V."/>
            <person name="Lee S.-M."/>
            <person name="Levine A."/>
            <person name="Liu H."/>
            <person name="Masuda S."/>
            <person name="Mauel C."/>
            <person name="Medigue C."/>
            <person name="Medina N."/>
            <person name="Mellado R.P."/>
            <person name="Mizuno M."/>
            <person name="Moestl D."/>
            <person name="Nakai S."/>
            <person name="Noback M."/>
            <person name="Noone D."/>
            <person name="O'Reilly M."/>
            <person name="Ogawa K."/>
            <person name="Ogiwara A."/>
            <person name="Oudega B."/>
            <person name="Park S.-H."/>
            <person name="Parro V."/>
            <person name="Pohl T.M."/>
            <person name="Portetelle D."/>
            <person name="Porwollik S."/>
            <person name="Prescott A.M."/>
            <person name="Presecan E."/>
            <person name="Pujic P."/>
            <person name="Purnelle B."/>
            <person name="Rapoport G."/>
            <person name="Rey M."/>
            <person name="Reynolds S."/>
            <person name="Rieger M."/>
            <person name="Rivolta C."/>
            <person name="Rocha E."/>
            <person name="Roche B."/>
            <person name="Rose M."/>
            <person name="Sadaie Y."/>
            <person name="Sato T."/>
            <person name="Scanlan E."/>
            <person name="Schleich S."/>
            <person name="Schroeter R."/>
            <person name="Scoffone F."/>
            <person name="Sekiguchi J."/>
            <person name="Sekowska A."/>
            <person name="Seror S.J."/>
            <person name="Serror P."/>
            <person name="Shin B.-S."/>
            <person name="Soldo B."/>
            <person name="Sorokin A."/>
            <person name="Tacconi E."/>
            <person name="Takagi T."/>
            <person name="Takahashi H."/>
            <person name="Takemaru K."/>
            <person name="Takeuchi M."/>
            <person name="Tamakoshi A."/>
            <person name="Tanaka T."/>
            <person name="Terpstra P."/>
            <person name="Tognoni A."/>
            <person name="Tosato V."/>
            <person name="Uchiyama S."/>
            <person name="Vandenbol M."/>
            <person name="Vannier F."/>
            <person name="Vassarotti A."/>
            <person name="Viari A."/>
            <person name="Wambutt R."/>
            <person name="Wedler E."/>
            <person name="Wedler H."/>
            <person name="Weitzenegger T."/>
            <person name="Winters P."/>
            <person name="Wipat A."/>
            <person name="Yamamoto H."/>
            <person name="Yamane K."/>
            <person name="Yasumoto K."/>
            <person name="Yata K."/>
            <person name="Yoshida K."/>
            <person name="Yoshikawa H.-F."/>
            <person name="Zumstein E."/>
            <person name="Yoshikawa H."/>
            <person name="Danchin A."/>
        </authorList>
    </citation>
    <scope>NUCLEOTIDE SEQUENCE [LARGE SCALE GENOMIC DNA]</scope>
    <source>
        <strain>168</strain>
    </source>
</reference>
<reference key="3">
    <citation type="journal article" date="2000" name="J. Bacteriol.">
        <title>Mutations in multidrug efflux homologs, sugar isomerases, and antimicrobial biosynthesis genes differentially elevate activity of the sigma(X) and sigma(W) factors in Bacillus subtilis.</title>
        <authorList>
            <person name="Turner M.S."/>
            <person name="Helmann J.D."/>
        </authorList>
    </citation>
    <scope>DISRUPTION PHENOTYPE</scope>
    <source>
        <strain>168 / CU1065</strain>
    </source>
</reference>
<comment type="disruption phenotype">
    <text evidence="3">Cells lacking this gene show up-regulated sigma X activity.</text>
</comment>
<comment type="similarity">
    <text evidence="4">Belongs to the glycosyl hydrolase-like 10 (GHL10) family.</text>
</comment>
<organism>
    <name type="scientific">Bacillus subtilis (strain 168)</name>
    <dbReference type="NCBI Taxonomy" id="224308"/>
    <lineage>
        <taxon>Bacteria</taxon>
        <taxon>Bacillati</taxon>
        <taxon>Bacillota</taxon>
        <taxon>Bacilli</taxon>
        <taxon>Bacillales</taxon>
        <taxon>Bacillaceae</taxon>
        <taxon>Bacillus</taxon>
    </lineage>
</organism>
<feature type="signal peptide" evidence="2">
    <location>
        <begin position="1"/>
        <end position="30"/>
    </location>
</feature>
<feature type="chain" id="PRO_0000379126" description="Glycosyl hydrolase YngK">
    <location>
        <begin position="31"/>
        <end position="510"/>
    </location>
</feature>
<protein>
    <recommendedName>
        <fullName evidence="1">Glycosyl hydrolase YngK</fullName>
        <ecNumber evidence="1">3.2.1.-</ecNumber>
    </recommendedName>
</protein>
<keyword id="KW-0326">Glycosidase</keyword>
<keyword id="KW-0378">Hydrolase</keyword>
<keyword id="KW-1185">Reference proteome</keyword>
<keyword id="KW-0732">Signal</keyword>
<gene>
    <name type="primary">yngK</name>
    <name type="synonym">yotA</name>
    <name type="ordered locus">BSU18280</name>
</gene>